<sequence>MIGAVNSVEAVITSIQGLSGSPEDLSALHDLLRGAQDSLRAEPGVNFSTLDQLDASKHSLGYLYFLEVLTCGPVSKEKAAYEIPIIARFINSCDAGQIRLASYKFVSLCKILKDHVIALGDPLRGVGPLLNAVQKLQVSSKRLTALHPDVLQLCLQAKSYKSGFSILSDDIVEIDQPRDFFLYSYYGGMICIGLKRFQKALELLYNVVTAPMHQVNAIALEAYKKYILVSLIHNGQFTNTLPKCASTAAQRSFKNYTGPYIELGNCYNDGKIGELEALVVARNAEFEEDKNLGLVKQAVSSLYKRNILRLTQKYLTLSLQDIANMVQLGNAKEAEMHVLQMIQDGQIHALINQKDGMVRFLEDPEQYKSSEMIEIMDSVIQRTIGLSKNLLAMDESLSCDPLYLGKVGRERQRYDFGDDFDTVPQKFSM</sequence>
<dbReference type="EMBL" id="AF361759">
    <property type="protein sequence ID" value="AAK61872.1"/>
    <property type="molecule type" value="Genomic_DNA"/>
</dbReference>
<dbReference type="EMBL" id="AF361760">
    <property type="protein sequence ID" value="AAK61873.1"/>
    <property type="molecule type" value="mRNA"/>
</dbReference>
<dbReference type="EMBL" id="AF395059">
    <property type="protein sequence ID" value="AAL58102.1"/>
    <property type="molecule type" value="mRNA"/>
</dbReference>
<dbReference type="EMBL" id="AL163817">
    <property type="protein sequence ID" value="CAB87764.1"/>
    <property type="status" value="ALT_SEQ"/>
    <property type="molecule type" value="Genomic_DNA"/>
</dbReference>
<dbReference type="EMBL" id="CP002688">
    <property type="protein sequence ID" value="AED92005.1"/>
    <property type="molecule type" value="Genomic_DNA"/>
</dbReference>
<dbReference type="EMBL" id="AF419585">
    <property type="protein sequence ID" value="AAL31917.1"/>
    <property type="molecule type" value="mRNA"/>
</dbReference>
<dbReference type="EMBL" id="AY113041">
    <property type="protein sequence ID" value="AAM47349.1"/>
    <property type="molecule type" value="mRNA"/>
</dbReference>
<dbReference type="EMBL" id="AY084910">
    <property type="protein sequence ID" value="AAM61473.1"/>
    <property type="molecule type" value="mRNA"/>
</dbReference>
<dbReference type="PIR" id="T48598">
    <property type="entry name" value="T48598"/>
</dbReference>
<dbReference type="RefSeq" id="NP_568296.1">
    <molecule id="Q8W575-1"/>
    <property type="nucleotide sequence ID" value="NM_121429.5"/>
</dbReference>
<dbReference type="SMR" id="Q8W575"/>
<dbReference type="BioGRID" id="16552">
    <property type="interactions" value="15"/>
</dbReference>
<dbReference type="FunCoup" id="Q8W575">
    <property type="interactions" value="5092"/>
</dbReference>
<dbReference type="IntAct" id="Q8W575">
    <property type="interactions" value="13"/>
</dbReference>
<dbReference type="STRING" id="3702.Q8W575"/>
<dbReference type="PaxDb" id="3702-AT5G14250.1"/>
<dbReference type="ProteomicsDB" id="222701">
    <molecule id="Q8W575-1"/>
</dbReference>
<dbReference type="DNASU" id="831275"/>
<dbReference type="EnsemblPlants" id="AT5G14250.1">
    <molecule id="Q8W575-1"/>
    <property type="protein sequence ID" value="AT5G14250.1"/>
    <property type="gene ID" value="AT5G14250"/>
</dbReference>
<dbReference type="GeneID" id="831275"/>
<dbReference type="Gramene" id="AT5G14250.1">
    <molecule id="Q8W575-1"/>
    <property type="protein sequence ID" value="AT5G14250.1"/>
    <property type="gene ID" value="AT5G14250"/>
</dbReference>
<dbReference type="KEGG" id="ath:AT5G14250"/>
<dbReference type="Araport" id="AT5G14250"/>
<dbReference type="TAIR" id="AT5G14250">
    <property type="gene designation" value="COP13"/>
</dbReference>
<dbReference type="eggNOG" id="KOG2582">
    <property type="taxonomic scope" value="Eukaryota"/>
</dbReference>
<dbReference type="HOGENOM" id="CLU_028825_0_1_1"/>
<dbReference type="InParanoid" id="Q8W575"/>
<dbReference type="OMA" id="NHYHDLV"/>
<dbReference type="OrthoDB" id="29061at2759"/>
<dbReference type="PhylomeDB" id="Q8W575"/>
<dbReference type="CD-CODE" id="4299E36E">
    <property type="entry name" value="Nucleolus"/>
</dbReference>
<dbReference type="PRO" id="PR:Q8W575"/>
<dbReference type="Proteomes" id="UP000006548">
    <property type="component" value="Chromosome 5"/>
</dbReference>
<dbReference type="ExpressionAtlas" id="Q8W575">
    <property type="expression patterns" value="baseline and differential"/>
</dbReference>
<dbReference type="GO" id="GO:0008180">
    <property type="term" value="C:COP9 signalosome"/>
    <property type="evidence" value="ECO:0007669"/>
    <property type="project" value="UniProtKB-KW"/>
</dbReference>
<dbReference type="GO" id="GO:0005737">
    <property type="term" value="C:cytoplasm"/>
    <property type="evidence" value="ECO:0007669"/>
    <property type="project" value="UniProtKB-SubCell"/>
</dbReference>
<dbReference type="GO" id="GO:0010971">
    <property type="term" value="P:positive regulation of G2/M transition of mitotic cell cycle"/>
    <property type="evidence" value="ECO:0000315"/>
    <property type="project" value="TAIR"/>
</dbReference>
<dbReference type="GO" id="GO:0000338">
    <property type="term" value="P:protein deneddylation"/>
    <property type="evidence" value="ECO:0000315"/>
    <property type="project" value="TAIR"/>
</dbReference>
<dbReference type="GO" id="GO:0009585">
    <property type="term" value="P:red, far-red light phototransduction"/>
    <property type="evidence" value="ECO:0007669"/>
    <property type="project" value="UniProtKB-KW"/>
</dbReference>
<dbReference type="FunFam" id="1.10.10.10:FF:000354">
    <property type="entry name" value="COP9 signalosome complex subunit 3"/>
    <property type="match status" value="1"/>
</dbReference>
<dbReference type="FunFam" id="1.25.40.570:FF:000008">
    <property type="entry name" value="COP9 signalosome complex subunit 3"/>
    <property type="match status" value="1"/>
</dbReference>
<dbReference type="Gene3D" id="1.25.40.570">
    <property type="match status" value="1"/>
</dbReference>
<dbReference type="InterPro" id="IPR055089">
    <property type="entry name" value="COP9_N"/>
</dbReference>
<dbReference type="InterPro" id="IPR050756">
    <property type="entry name" value="CSN3"/>
</dbReference>
<dbReference type="InterPro" id="IPR000717">
    <property type="entry name" value="PCI_dom"/>
</dbReference>
<dbReference type="InterPro" id="IPR036390">
    <property type="entry name" value="WH_DNA-bd_sf"/>
</dbReference>
<dbReference type="PANTHER" id="PTHR10758">
    <property type="entry name" value="26S PROTEASOME NON-ATPASE REGULATORY SUBUNIT 3/COP9 SIGNALOSOME COMPLEX SUBUNIT 3"/>
    <property type="match status" value="1"/>
</dbReference>
<dbReference type="PANTHER" id="PTHR10758:SF1">
    <property type="entry name" value="COP9 SIGNALOSOME COMPLEX SUBUNIT 3"/>
    <property type="match status" value="1"/>
</dbReference>
<dbReference type="Pfam" id="PF22788">
    <property type="entry name" value="COP9_hel_rpt"/>
    <property type="match status" value="1"/>
</dbReference>
<dbReference type="Pfam" id="PF01399">
    <property type="entry name" value="PCI"/>
    <property type="match status" value="1"/>
</dbReference>
<dbReference type="SMART" id="SM00088">
    <property type="entry name" value="PINT"/>
    <property type="match status" value="1"/>
</dbReference>
<dbReference type="SUPFAM" id="SSF46785">
    <property type="entry name" value="Winged helix' DNA-binding domain"/>
    <property type="match status" value="1"/>
</dbReference>
<dbReference type="PROSITE" id="PS50250">
    <property type="entry name" value="PCI"/>
    <property type="match status" value="1"/>
</dbReference>
<name>CSN3_ARATH</name>
<gene>
    <name type="primary">CSN3</name>
    <name type="synonym">FUS11</name>
    <name type="ordered locus">At5g14250</name>
    <name type="ORF">F18O22.40</name>
</gene>
<organism>
    <name type="scientific">Arabidopsis thaliana</name>
    <name type="common">Mouse-ear cress</name>
    <dbReference type="NCBI Taxonomy" id="3702"/>
    <lineage>
        <taxon>Eukaryota</taxon>
        <taxon>Viridiplantae</taxon>
        <taxon>Streptophyta</taxon>
        <taxon>Embryophyta</taxon>
        <taxon>Tracheophyta</taxon>
        <taxon>Spermatophyta</taxon>
        <taxon>Magnoliopsida</taxon>
        <taxon>eudicotyledons</taxon>
        <taxon>Gunneridae</taxon>
        <taxon>Pentapetalae</taxon>
        <taxon>rosids</taxon>
        <taxon>malvids</taxon>
        <taxon>Brassicales</taxon>
        <taxon>Brassicaceae</taxon>
        <taxon>Camelineae</taxon>
        <taxon>Arabidopsis</taxon>
    </lineage>
</organism>
<proteinExistence type="evidence at protein level"/>
<reference key="1">
    <citation type="journal article" date="2001" name="Development">
        <title>A role of Arabidopsis COP9 signalosome in multifaceted developmental processes revealed by the characterization of its subunit 3.</title>
        <authorList>
            <person name="Peng Z."/>
            <person name="Serino G."/>
            <person name="Deng X.-W."/>
        </authorList>
    </citation>
    <scope>NUCLEOTIDE SEQUENCE [GENOMIC DNA]</scope>
    <scope>FUNCTION</scope>
    <scope>COMPONENT OF THE CSN COMPLEX WITH CSN3 AND CSN5</scope>
</reference>
<reference key="2">
    <citation type="journal article" date="2001" name="EMBO J.">
        <title>Subunit interaction maps for the regulatory particle of the 26S proteasome and the COP9 signalosome.</title>
        <authorList>
            <person name="Fu H."/>
            <person name="Reis N."/>
            <person name="Lee Y."/>
            <person name="Glickman M.H."/>
            <person name="Vierstra R."/>
        </authorList>
    </citation>
    <scope>NUCLEOTIDE SEQUENCE</scope>
</reference>
<reference key="3">
    <citation type="journal article" date="2000" name="Nature">
        <title>Sequence and analysis of chromosome 5 of the plant Arabidopsis thaliana.</title>
        <authorList>
            <person name="Tabata S."/>
            <person name="Kaneko T."/>
            <person name="Nakamura Y."/>
            <person name="Kotani H."/>
            <person name="Kato T."/>
            <person name="Asamizu E."/>
            <person name="Miyajima N."/>
            <person name="Sasamoto S."/>
            <person name="Kimura T."/>
            <person name="Hosouchi T."/>
            <person name="Kawashima K."/>
            <person name="Kohara M."/>
            <person name="Matsumoto M."/>
            <person name="Matsuno A."/>
            <person name="Muraki A."/>
            <person name="Nakayama S."/>
            <person name="Nakazaki N."/>
            <person name="Naruo K."/>
            <person name="Okumura S."/>
            <person name="Shinpo S."/>
            <person name="Takeuchi C."/>
            <person name="Wada T."/>
            <person name="Watanabe A."/>
            <person name="Yamada M."/>
            <person name="Yasuda M."/>
            <person name="Sato S."/>
            <person name="de la Bastide M."/>
            <person name="Huang E."/>
            <person name="Spiegel L."/>
            <person name="Gnoj L."/>
            <person name="O'Shaughnessy A."/>
            <person name="Preston R."/>
            <person name="Habermann K."/>
            <person name="Murray J."/>
            <person name="Johnson D."/>
            <person name="Rohlfing T."/>
            <person name="Nelson J."/>
            <person name="Stoneking T."/>
            <person name="Pepin K."/>
            <person name="Spieth J."/>
            <person name="Sekhon M."/>
            <person name="Armstrong J."/>
            <person name="Becker M."/>
            <person name="Belter E."/>
            <person name="Cordum H."/>
            <person name="Cordes M."/>
            <person name="Courtney L."/>
            <person name="Courtney W."/>
            <person name="Dante M."/>
            <person name="Du H."/>
            <person name="Edwards J."/>
            <person name="Fryman J."/>
            <person name="Haakensen B."/>
            <person name="Lamar E."/>
            <person name="Latreille P."/>
            <person name="Leonard S."/>
            <person name="Meyer R."/>
            <person name="Mulvaney E."/>
            <person name="Ozersky P."/>
            <person name="Riley A."/>
            <person name="Strowmatt C."/>
            <person name="Wagner-McPherson C."/>
            <person name="Wollam A."/>
            <person name="Yoakum M."/>
            <person name="Bell M."/>
            <person name="Dedhia N."/>
            <person name="Parnell L."/>
            <person name="Shah R."/>
            <person name="Rodriguez M."/>
            <person name="Hoon See L."/>
            <person name="Vil D."/>
            <person name="Baker J."/>
            <person name="Kirchoff K."/>
            <person name="Toth K."/>
            <person name="King L."/>
            <person name="Bahret A."/>
            <person name="Miller B."/>
            <person name="Marra M.A."/>
            <person name="Martienssen R."/>
            <person name="McCombie W.R."/>
            <person name="Wilson R.K."/>
            <person name="Murphy G."/>
            <person name="Bancroft I."/>
            <person name="Volckaert G."/>
            <person name="Wambutt R."/>
            <person name="Duesterhoeft A."/>
            <person name="Stiekema W."/>
            <person name="Pohl T."/>
            <person name="Entian K.-D."/>
            <person name="Terryn N."/>
            <person name="Hartley N."/>
            <person name="Bent E."/>
            <person name="Johnson S."/>
            <person name="Langham S.-A."/>
            <person name="McCullagh B."/>
            <person name="Robben J."/>
            <person name="Grymonprez B."/>
            <person name="Zimmermann W."/>
            <person name="Ramsperger U."/>
            <person name="Wedler H."/>
            <person name="Balke K."/>
            <person name="Wedler E."/>
            <person name="Peters S."/>
            <person name="van Staveren M."/>
            <person name="Dirkse W."/>
            <person name="Mooijman P."/>
            <person name="Klein Lankhorst R."/>
            <person name="Weitzenegger T."/>
            <person name="Bothe G."/>
            <person name="Rose M."/>
            <person name="Hauf J."/>
            <person name="Berneiser S."/>
            <person name="Hempel S."/>
            <person name="Feldpausch M."/>
            <person name="Lamberth S."/>
            <person name="Villarroel R."/>
            <person name="Gielen J."/>
            <person name="Ardiles W."/>
            <person name="Bents O."/>
            <person name="Lemcke K."/>
            <person name="Kolesov G."/>
            <person name="Mayer K.F.X."/>
            <person name="Rudd S."/>
            <person name="Schoof H."/>
            <person name="Schueller C."/>
            <person name="Zaccaria P."/>
            <person name="Mewes H.-W."/>
            <person name="Bevan M."/>
            <person name="Fransz P.F."/>
        </authorList>
    </citation>
    <scope>NUCLEOTIDE SEQUENCE [LARGE SCALE GENOMIC DNA]</scope>
    <source>
        <strain>cv. Columbia</strain>
    </source>
</reference>
<reference key="4">
    <citation type="journal article" date="2017" name="Plant J.">
        <title>Araport11: a complete reannotation of the Arabidopsis thaliana reference genome.</title>
        <authorList>
            <person name="Cheng C.Y."/>
            <person name="Krishnakumar V."/>
            <person name="Chan A.P."/>
            <person name="Thibaud-Nissen F."/>
            <person name="Schobel S."/>
            <person name="Town C.D."/>
        </authorList>
    </citation>
    <scope>GENOME REANNOTATION</scope>
    <source>
        <strain>cv. Columbia</strain>
    </source>
</reference>
<reference key="5">
    <citation type="journal article" date="2003" name="Science">
        <title>Empirical analysis of transcriptional activity in the Arabidopsis genome.</title>
        <authorList>
            <person name="Yamada K."/>
            <person name="Lim J."/>
            <person name="Dale J.M."/>
            <person name="Chen H."/>
            <person name="Shinn P."/>
            <person name="Palm C.J."/>
            <person name="Southwick A.M."/>
            <person name="Wu H.C."/>
            <person name="Kim C.J."/>
            <person name="Nguyen M."/>
            <person name="Pham P.K."/>
            <person name="Cheuk R.F."/>
            <person name="Karlin-Newmann G."/>
            <person name="Liu S.X."/>
            <person name="Lam B."/>
            <person name="Sakano H."/>
            <person name="Wu T."/>
            <person name="Yu G."/>
            <person name="Miranda M."/>
            <person name="Quach H.L."/>
            <person name="Tripp M."/>
            <person name="Chang C.H."/>
            <person name="Lee J.M."/>
            <person name="Toriumi M.J."/>
            <person name="Chan M.M."/>
            <person name="Tang C.C."/>
            <person name="Onodera C.S."/>
            <person name="Deng J.M."/>
            <person name="Akiyama K."/>
            <person name="Ansari Y."/>
            <person name="Arakawa T."/>
            <person name="Banh J."/>
            <person name="Banno F."/>
            <person name="Bowser L."/>
            <person name="Brooks S.Y."/>
            <person name="Carninci P."/>
            <person name="Chao Q."/>
            <person name="Choy N."/>
            <person name="Enju A."/>
            <person name="Goldsmith A.D."/>
            <person name="Gurjal M."/>
            <person name="Hansen N.F."/>
            <person name="Hayashizaki Y."/>
            <person name="Johnson-Hopson C."/>
            <person name="Hsuan V.W."/>
            <person name="Iida K."/>
            <person name="Karnes M."/>
            <person name="Khan S."/>
            <person name="Koesema E."/>
            <person name="Ishida J."/>
            <person name="Jiang P.X."/>
            <person name="Jones T."/>
            <person name="Kawai J."/>
            <person name="Kamiya A."/>
            <person name="Meyers C."/>
            <person name="Nakajima M."/>
            <person name="Narusaka M."/>
            <person name="Seki M."/>
            <person name="Sakurai T."/>
            <person name="Satou M."/>
            <person name="Tamse R."/>
            <person name="Vaysberg M."/>
            <person name="Wallender E.K."/>
            <person name="Wong C."/>
            <person name="Yamamura Y."/>
            <person name="Yuan S."/>
            <person name="Shinozaki K."/>
            <person name="Davis R.W."/>
            <person name="Theologis A."/>
            <person name="Ecker J.R."/>
        </authorList>
    </citation>
    <scope>NUCLEOTIDE SEQUENCE [LARGE SCALE MRNA]</scope>
    <source>
        <strain>cv. Columbia</strain>
    </source>
</reference>
<reference key="6">
    <citation type="submission" date="2002-03" db="EMBL/GenBank/DDBJ databases">
        <title>Full-length cDNA from Arabidopsis thaliana.</title>
        <authorList>
            <person name="Brover V.V."/>
            <person name="Troukhan M.E."/>
            <person name="Alexandrov N.A."/>
            <person name="Lu Y.-P."/>
            <person name="Flavell R.B."/>
            <person name="Feldmann K.A."/>
        </authorList>
    </citation>
    <scope>NUCLEOTIDE SEQUENCE [LARGE SCALE MRNA]</scope>
</reference>
<reference key="7">
    <citation type="journal article" date="2001" name="Science">
        <title>Interactions of the COP9 signalosome with the E3 ubiquitin ligase SCF(TIR1) in mediating auxin response.</title>
        <authorList>
            <person name="Schwechheimer C."/>
            <person name="Serino G."/>
            <person name="Callis J."/>
            <person name="Crosby W.L."/>
            <person name="Lyapina S."/>
            <person name="Deshaies R.J."/>
            <person name="Gray W.M."/>
            <person name="Estelle M."/>
            <person name="Deng X.-W."/>
        </authorList>
    </citation>
    <scope>FUNCTION</scope>
</reference>
<reference key="8">
    <citation type="journal article" date="2002" name="Genes Dev.">
        <title>Arabidopsis COP10 is a ubiquitin-conjugating enzyme variant that acts together with COP1 and the COP9 signalosome in repressing photomorphogenesis.</title>
        <authorList>
            <person name="Suzuki G."/>
            <person name="Yanagawa Y."/>
            <person name="Kwok S.F."/>
            <person name="Matsui M."/>
            <person name="Deng X.-W."/>
        </authorList>
    </citation>
    <scope>INTERACTION WITH COP10</scope>
</reference>
<reference key="9">
    <citation type="journal article" date="2003" name="Plant Cell">
        <title>Characterization of the last subunit of the Arabidopsis COP9 signalosome: implications for the overall structure and origin of the complex.</title>
        <authorList>
            <person name="Serino G."/>
            <person name="Su H."/>
            <person name="Peng Z."/>
            <person name="Tsuge T."/>
            <person name="Wei N."/>
            <person name="Gu H."/>
            <person name="Deng X.-W."/>
        </authorList>
    </citation>
    <scope>INTERACTION WITH CSN1; CSN4; CSN6 AND CSN8</scope>
</reference>
<comment type="function">
    <text evidence="2 3">Component of the COP9 signalosome complex (CSN), a complex involved in various cellular and developmental processes such as photomorphogenesis and auxin and jasmonate responses. The CSN complex is an essential regulator of the ubiquitin (Ubl) conjugation pathway by mediating the deneddylation of the cullin subunits of SCF-type E3 ligase complexes, leading to decrease the Ubl ligase activity of SCF. It is involved in repression of photomorphogenesis in darkness by regulating the activity of COP1-containing Ubl ligase complexes. The complex is also required for degradation of IAA6 by regulating the activity of the Ubl ligase SCF-TIR complex.</text>
</comment>
<comment type="subunit">
    <text evidence="4 5">Component of the CSN complex, probably composed of CSN1, CSN2, CSN3, CSN4, CSN5 (CSN5A or CSN5B), CSN6 (CSN6A or CSN6B), CSN7 and CSN8. In the CSN complex, it probably interacts directly with CSN1, CSN4, CSN6 and CSN8. Interacts with COP10.</text>
</comment>
<comment type="interaction">
    <interactant intactId="EBI-531055">
        <id>Q8W575</id>
    </interactant>
    <interactant intactId="EBI-530996">
        <id>P45432</id>
        <label>CSN1</label>
    </interactant>
    <organismsDiffer>false</organismsDiffer>
    <experiments>3</experiments>
</comment>
<comment type="interaction">
    <interactant intactId="EBI-531055">
        <id>Q8W575</id>
    </interactant>
    <interactant intactId="EBI-531074">
        <id>Q8L5U0</id>
        <label>CSN4</label>
    </interactant>
    <organismsDiffer>false</organismsDiffer>
    <experiments>5</experiments>
</comment>
<comment type="interaction">
    <interactant intactId="EBI-531055">
        <id>Q8W575</id>
    </interactant>
    <interactant intactId="EBI-531094">
        <id>Q8W206</id>
        <label>CSN6A</label>
    </interactant>
    <organismsDiffer>false</organismsDiffer>
    <experiments>3</experiments>
</comment>
<comment type="interaction">
    <interactant intactId="EBI-531055">
        <id>Q8W575</id>
    </interactant>
    <interactant intactId="EBI-530981">
        <id>P43255</id>
        <label>CSN8</label>
    </interactant>
    <organismsDiffer>false</organismsDiffer>
    <experiments>6</experiments>
</comment>
<comment type="interaction">
    <interactant intactId="EBI-531055">
        <id>Q8W575</id>
    </interactant>
    <interactant intactId="EBI-541750">
        <id>Q8LGH4</id>
        <label>CUL4</label>
    </interactant>
    <organismsDiffer>false</organismsDiffer>
    <experiments>2</experiments>
</comment>
<comment type="interaction">
    <interactant intactId="EBI-531055">
        <id>Q8W575</id>
    </interactant>
    <interactant intactId="EBI-4424568">
        <id>Q9LVG2</id>
        <label>TOE2</label>
    </interactant>
    <organismsDiffer>false</organismsDiffer>
    <experiments>3</experiments>
</comment>
<comment type="subcellular location">
    <subcellularLocation>
        <location>Cytoplasm</location>
    </subcellularLocation>
    <subcellularLocation>
        <location>Nucleus</location>
    </subcellularLocation>
</comment>
<comment type="alternative products">
    <event type="alternative splicing"/>
    <isoform>
        <id>Q8W575-1</id>
        <name>1</name>
        <sequence type="displayed"/>
    </isoform>
    <text>A number of isoforms are produced. According to EST sequences.</text>
</comment>
<comment type="similarity">
    <text evidence="6">Belongs to the CSN3 family.</text>
</comment>
<comment type="sequence caution" evidence="6">
    <conflict type="erroneous gene model prediction">
        <sequence resource="EMBL-CDS" id="CAB87764"/>
    </conflict>
</comment>
<protein>
    <recommendedName>
        <fullName>COP9 signalosome complex subunit 3</fullName>
        <shortName>Signalosome subunit 3</shortName>
    </recommendedName>
    <alternativeName>
        <fullName>Protein FUSCA 11</fullName>
    </alternativeName>
</protein>
<evidence type="ECO:0000255" key="1">
    <source>
        <dbReference type="PROSITE-ProRule" id="PRU01185"/>
    </source>
</evidence>
<evidence type="ECO:0000269" key="2">
    <source>
    </source>
</evidence>
<evidence type="ECO:0000269" key="3">
    <source>
    </source>
</evidence>
<evidence type="ECO:0000269" key="4">
    <source>
    </source>
</evidence>
<evidence type="ECO:0000269" key="5">
    <source>
    </source>
</evidence>
<evidence type="ECO:0000305" key="6"/>
<keyword id="KW-0025">Alternative splicing</keyword>
<keyword id="KW-0963">Cytoplasm</keyword>
<keyword id="KW-0217">Developmental protein</keyword>
<keyword id="KW-0539">Nucleus</keyword>
<keyword id="KW-0607">Phytochrome signaling pathway</keyword>
<keyword id="KW-1185">Reference proteome</keyword>
<keyword id="KW-0736">Signalosome</keyword>
<feature type="chain" id="PRO_0000120984" description="COP9 signalosome complex subunit 3">
    <location>
        <begin position="1"/>
        <end position="429"/>
    </location>
</feature>
<feature type="domain" description="PCI" evidence="1">
    <location>
        <begin position="196"/>
        <end position="365"/>
    </location>
</feature>
<feature type="sequence conflict" description="In Ref. 5; AAL31917/AAM47349." evidence="6" ref="5">
    <original>DV</original>
    <variation>EF</variation>
    <location>
        <begin position="149"/>
        <end position="150"/>
    </location>
</feature>
<accession>Q8W575</accession>
<accession>Q93VY1</accession>
<accession>Q9LYA4</accession>